<proteinExistence type="inferred from homology"/>
<comment type="function">
    <text evidence="1">Required for the proper function of SLD3 at the initiation of DNA replication. Binds to SLD3 and reduces its affinity for CDC45, a component of the replication fork. Required for mitochondrial morphology (By similarity).</text>
</comment>
<comment type="subunit">
    <text evidence="1">Interacts with SLD3.</text>
</comment>
<comment type="subcellular location">
    <subcellularLocation>
        <location evidence="1">Nucleus</location>
    </subcellularLocation>
    <subcellularLocation>
        <location evidence="1">Cytoplasm</location>
        <location evidence="1">Cytoskeleton</location>
        <location evidence="1">Spindle pole</location>
    </subcellularLocation>
</comment>
<comment type="similarity">
    <text evidence="2">Belongs to the SLD7 family.</text>
</comment>
<name>SLD7_YEASV</name>
<protein>
    <recommendedName>
        <fullName>Mitochondrial morphogenesis protein SLD7</fullName>
    </recommendedName>
    <alternativeName>
        <fullName>Synthetic lethality with DPB11-24 mutation protein 7</fullName>
    </alternativeName>
</protein>
<feature type="chain" id="PRO_0000411037" description="Mitochondrial morphogenesis protein SLD7">
    <location>
        <begin position="1"/>
        <end position="257"/>
    </location>
</feature>
<dbReference type="EMBL" id="ADXC01000073">
    <property type="protein sequence ID" value="EGA76873.1"/>
    <property type="molecule type" value="Genomic_DNA"/>
</dbReference>
<dbReference type="SMR" id="E7M099"/>
<dbReference type="HOGENOM" id="CLU_072105_0_0_1"/>
<dbReference type="OMA" id="EFTHRDE"/>
<dbReference type="OrthoDB" id="34738at4893"/>
<dbReference type="GO" id="GO:0005737">
    <property type="term" value="C:cytoplasm"/>
    <property type="evidence" value="ECO:0007669"/>
    <property type="project" value="UniProtKB-KW"/>
</dbReference>
<dbReference type="GO" id="GO:0005634">
    <property type="term" value="C:nucleus"/>
    <property type="evidence" value="ECO:0007669"/>
    <property type="project" value="UniProtKB-SubCell"/>
</dbReference>
<dbReference type="GO" id="GO:0000922">
    <property type="term" value="C:spindle pole"/>
    <property type="evidence" value="ECO:0007669"/>
    <property type="project" value="UniProtKB-SubCell"/>
</dbReference>
<dbReference type="GO" id="GO:0006260">
    <property type="term" value="P:DNA replication"/>
    <property type="evidence" value="ECO:0007669"/>
    <property type="project" value="UniProtKB-KW"/>
</dbReference>
<dbReference type="GO" id="GO:0030174">
    <property type="term" value="P:regulation of DNA-templated DNA replication initiation"/>
    <property type="evidence" value="ECO:0007669"/>
    <property type="project" value="InterPro"/>
</dbReference>
<dbReference type="InterPro" id="IPR016808">
    <property type="entry name" value="Sld7"/>
</dbReference>
<dbReference type="InterPro" id="IPR041260">
    <property type="entry name" value="Sld7_C"/>
</dbReference>
<dbReference type="InterPro" id="IPR041564">
    <property type="entry name" value="Sld7_N"/>
</dbReference>
<dbReference type="Pfam" id="PF18596">
    <property type="entry name" value="Sld7_C"/>
    <property type="match status" value="1"/>
</dbReference>
<dbReference type="Pfam" id="PF18636">
    <property type="entry name" value="Sld7_N"/>
    <property type="match status" value="1"/>
</dbReference>
<dbReference type="PIRSF" id="PIRSF022788">
    <property type="entry name" value="UCP022788"/>
    <property type="match status" value="1"/>
</dbReference>
<keyword id="KW-0131">Cell cycle</keyword>
<keyword id="KW-0963">Cytoplasm</keyword>
<keyword id="KW-0206">Cytoskeleton</keyword>
<keyword id="KW-0235">DNA replication</keyword>
<keyword id="KW-0539">Nucleus</keyword>
<gene>
    <name type="primary">SLD7</name>
    <name type="ORF">VIN13_4425</name>
</gene>
<evidence type="ECO:0000250" key="1"/>
<evidence type="ECO:0000305" key="2"/>
<sequence length="257" mass="29552">MSRKLCTLNFTLSGKQGSLVIRDIQLWSNRPTASKSTSELRGQFIQYVDLAKLPLWVRSTNMNTYRCYSTSATAQAYFKSKLRNANRGIVIELSDKVDQRSQEPAYLIIFRENTELNCFQVDLTMKHEFDGQVTKLKQEIGKTRASVSKEGSIDIIIQQSQQRKIGTKTKVYRNVHINDKRLQFNETLSKLILGGLRLRGISNSITDYQKLYKITFDAAEFTHRDELKRISMGSVEEVSFESLQETVETLLKLFTKS</sequence>
<organism>
    <name type="scientific">Saccharomyces cerevisiae (strain VIN 13)</name>
    <name type="common">Baker's yeast</name>
    <dbReference type="NCBI Taxonomy" id="764099"/>
    <lineage>
        <taxon>Eukaryota</taxon>
        <taxon>Fungi</taxon>
        <taxon>Dikarya</taxon>
        <taxon>Ascomycota</taxon>
        <taxon>Saccharomycotina</taxon>
        <taxon>Saccharomycetes</taxon>
        <taxon>Saccharomycetales</taxon>
        <taxon>Saccharomycetaceae</taxon>
        <taxon>Saccharomyces</taxon>
    </lineage>
</organism>
<reference key="1">
    <citation type="journal article" date="2011" name="PLoS Genet.">
        <title>Whole-genome comparison reveals novel genetic elements that characterize the genome of industrial strains of Saccharomyces cerevisiae.</title>
        <authorList>
            <person name="Borneman A.R."/>
            <person name="Desany B.A."/>
            <person name="Riches D."/>
            <person name="Affourtit J.P."/>
            <person name="Forgan A.H."/>
            <person name="Pretorius I.S."/>
            <person name="Egholm M."/>
            <person name="Chambers P.J."/>
        </authorList>
    </citation>
    <scope>NUCLEOTIDE SEQUENCE [LARGE SCALE GENOMIC DNA]</scope>
    <source>
        <strain>VIN 13</strain>
    </source>
</reference>
<accession>E7M099</accession>